<geneLocation type="chloroplast"/>
<comment type="function">
    <text evidence="1">Cleaves peptides in various proteins in a process that requires ATP hydrolysis. Has a chymotrypsin-like activity. Plays a major role in the degradation of misfolded proteins.</text>
</comment>
<comment type="catalytic activity">
    <reaction evidence="1">
        <text>Hydrolysis of proteins to small peptides in the presence of ATP and magnesium. alpha-casein is the usual test substrate. In the absence of ATP, only oligopeptides shorter than five residues are hydrolyzed (such as succinyl-Leu-Tyr-|-NHMec, and Leu-Tyr-Leu-|-Tyr-Trp, in which cleavage of the -Tyr-|-Leu- and -Tyr-|-Trp bonds also occurs).</text>
        <dbReference type="EC" id="3.4.21.92"/>
    </reaction>
</comment>
<comment type="subunit">
    <text>Component of the chloroplastic Clp protease core complex.</text>
</comment>
<comment type="subcellular location">
    <subcellularLocation>
        <location evidence="1">Plastid</location>
        <location evidence="1">Chloroplast stroma</location>
    </subcellularLocation>
</comment>
<comment type="similarity">
    <text evidence="1">Belongs to the peptidase S14 family.</text>
</comment>
<sequence>MPIGVPKVPFRSPGEEDAVWVDIYNRLHRERLLFLGQGVDSEISNQLVGLMVYLSMEDNTRDLYLFINSPGGWVIPGIAIYDAMQIVPPDVHTICMGLAASMGSFILVGGEFTKRLAFPHARVMIHQPASSFYEAQAGEFILEAEELLKLREILTRVYVQRTGKPLWVVSEDMERDVFMSATEAQAHGIVDLVAVENSADFV</sequence>
<accession>A1XFY0</accession>
<reference key="1">
    <citation type="journal article" date="2007" name="BMC Genomics">
        <title>Comparative chloroplast genomics: analyses including new sequences from the angiosperms Nuphar advena and Ranunculus macranthus.</title>
        <authorList>
            <person name="Raubeson L.A."/>
            <person name="Peery R."/>
            <person name="Chumley T.W."/>
            <person name="Dziubek C."/>
            <person name="Fourcade H.M."/>
            <person name="Boore J.L."/>
            <person name="Jansen R.K."/>
        </authorList>
    </citation>
    <scope>NUCLEOTIDE SEQUENCE [LARGE SCALE GENOMIC DNA]</scope>
</reference>
<name>CLPP_NUPAD</name>
<gene>
    <name evidence="1" type="primary">clpP</name>
</gene>
<proteinExistence type="inferred from homology"/>
<organism>
    <name type="scientific">Nuphar advena</name>
    <name type="common">Common spatterdock</name>
    <name type="synonym">Nuphar lutea subsp. advena</name>
    <dbReference type="NCBI Taxonomy" id="77108"/>
    <lineage>
        <taxon>Eukaryota</taxon>
        <taxon>Viridiplantae</taxon>
        <taxon>Streptophyta</taxon>
        <taxon>Embryophyta</taxon>
        <taxon>Tracheophyta</taxon>
        <taxon>Spermatophyta</taxon>
        <taxon>Magnoliopsida</taxon>
        <taxon>Nymphaeales</taxon>
        <taxon>Nymphaeaceae</taxon>
        <taxon>Nuphar</taxon>
    </lineage>
</organism>
<keyword id="KW-0150">Chloroplast</keyword>
<keyword id="KW-0378">Hydrolase</keyword>
<keyword id="KW-0934">Plastid</keyword>
<keyword id="KW-0645">Protease</keyword>
<keyword id="KW-0720">Serine protease</keyword>
<feature type="chain" id="PRO_0000309307" description="ATP-dependent Clp protease proteolytic subunit">
    <location>
        <begin position="1"/>
        <end position="202"/>
    </location>
</feature>
<feature type="active site" description="Nucleophile" evidence="1">
    <location>
        <position position="101"/>
    </location>
</feature>
<feature type="active site" evidence="1">
    <location>
        <position position="126"/>
    </location>
</feature>
<evidence type="ECO:0000255" key="1">
    <source>
        <dbReference type="HAMAP-Rule" id="MF_00444"/>
    </source>
</evidence>
<protein>
    <recommendedName>
        <fullName evidence="1">ATP-dependent Clp protease proteolytic subunit</fullName>
        <ecNumber evidence="1">3.4.21.92</ecNumber>
    </recommendedName>
    <alternativeName>
        <fullName evidence="1">Endopeptidase Clp</fullName>
    </alternativeName>
</protein>
<dbReference type="EC" id="3.4.21.92" evidence="1"/>
<dbReference type="EMBL" id="DQ354691">
    <property type="protein sequence ID" value="ABC60483.1"/>
    <property type="molecule type" value="Genomic_DNA"/>
</dbReference>
<dbReference type="RefSeq" id="YP_001001559.1">
    <property type="nucleotide sequence ID" value="NC_008788.1"/>
</dbReference>
<dbReference type="SMR" id="A1XFY0"/>
<dbReference type="MEROPS" id="S14.002"/>
<dbReference type="GeneID" id="4699558"/>
<dbReference type="GO" id="GO:0009570">
    <property type="term" value="C:chloroplast stroma"/>
    <property type="evidence" value="ECO:0007669"/>
    <property type="project" value="UniProtKB-SubCell"/>
</dbReference>
<dbReference type="GO" id="GO:0009368">
    <property type="term" value="C:endopeptidase Clp complex"/>
    <property type="evidence" value="ECO:0007669"/>
    <property type="project" value="TreeGrafter"/>
</dbReference>
<dbReference type="GO" id="GO:0004176">
    <property type="term" value="F:ATP-dependent peptidase activity"/>
    <property type="evidence" value="ECO:0007669"/>
    <property type="project" value="InterPro"/>
</dbReference>
<dbReference type="GO" id="GO:0051117">
    <property type="term" value="F:ATPase binding"/>
    <property type="evidence" value="ECO:0007669"/>
    <property type="project" value="TreeGrafter"/>
</dbReference>
<dbReference type="GO" id="GO:0004252">
    <property type="term" value="F:serine-type endopeptidase activity"/>
    <property type="evidence" value="ECO:0007669"/>
    <property type="project" value="UniProtKB-UniRule"/>
</dbReference>
<dbReference type="GO" id="GO:0006515">
    <property type="term" value="P:protein quality control for misfolded or incompletely synthesized proteins"/>
    <property type="evidence" value="ECO:0007669"/>
    <property type="project" value="TreeGrafter"/>
</dbReference>
<dbReference type="CDD" id="cd07017">
    <property type="entry name" value="S14_ClpP_2"/>
    <property type="match status" value="1"/>
</dbReference>
<dbReference type="FunFam" id="3.90.226.10:FF:000006">
    <property type="entry name" value="ATP-dependent Clp protease proteolytic subunit"/>
    <property type="match status" value="1"/>
</dbReference>
<dbReference type="Gene3D" id="3.90.226.10">
    <property type="entry name" value="2-enoyl-CoA Hydratase, Chain A, domain 1"/>
    <property type="match status" value="1"/>
</dbReference>
<dbReference type="HAMAP" id="MF_00444">
    <property type="entry name" value="ClpP"/>
    <property type="match status" value="1"/>
</dbReference>
<dbReference type="InterPro" id="IPR001907">
    <property type="entry name" value="ClpP"/>
</dbReference>
<dbReference type="InterPro" id="IPR029045">
    <property type="entry name" value="ClpP/crotonase-like_dom_sf"/>
</dbReference>
<dbReference type="InterPro" id="IPR023562">
    <property type="entry name" value="ClpP/TepA"/>
</dbReference>
<dbReference type="InterPro" id="IPR033135">
    <property type="entry name" value="ClpP_His_AS"/>
</dbReference>
<dbReference type="InterPro" id="IPR018215">
    <property type="entry name" value="ClpP_Ser_AS"/>
</dbReference>
<dbReference type="PANTHER" id="PTHR10381">
    <property type="entry name" value="ATP-DEPENDENT CLP PROTEASE PROTEOLYTIC SUBUNIT"/>
    <property type="match status" value="1"/>
</dbReference>
<dbReference type="PANTHER" id="PTHR10381:SF15">
    <property type="entry name" value="CHLOROPLASTIC ATP-DEPENDENT CLP PROTEASE PROTEOLYTIC SUBUNIT 1"/>
    <property type="match status" value="1"/>
</dbReference>
<dbReference type="Pfam" id="PF00574">
    <property type="entry name" value="CLP_protease"/>
    <property type="match status" value="1"/>
</dbReference>
<dbReference type="PRINTS" id="PR00127">
    <property type="entry name" value="CLPPROTEASEP"/>
</dbReference>
<dbReference type="SUPFAM" id="SSF52096">
    <property type="entry name" value="ClpP/crotonase"/>
    <property type="match status" value="1"/>
</dbReference>
<dbReference type="PROSITE" id="PS00382">
    <property type="entry name" value="CLP_PROTEASE_HIS"/>
    <property type="match status" value="1"/>
</dbReference>
<dbReference type="PROSITE" id="PS00381">
    <property type="entry name" value="CLP_PROTEASE_SER"/>
    <property type="match status" value="1"/>
</dbReference>